<dbReference type="EMBL" id="CP000854">
    <property type="protein sequence ID" value="ACC42249.1"/>
    <property type="molecule type" value="Genomic_DNA"/>
</dbReference>
<dbReference type="RefSeq" id="WP_012395439.1">
    <property type="nucleotide sequence ID" value="NC_010612.1"/>
</dbReference>
<dbReference type="SMR" id="B2HNJ6"/>
<dbReference type="STRING" id="216594.MMAR_3838"/>
<dbReference type="KEGG" id="mmi:MMAR_3838"/>
<dbReference type="eggNOG" id="COG1492">
    <property type="taxonomic scope" value="Bacteria"/>
</dbReference>
<dbReference type="HOGENOM" id="CLU_019250_2_2_11"/>
<dbReference type="OrthoDB" id="9808302at2"/>
<dbReference type="UniPathway" id="UPA00148"/>
<dbReference type="Proteomes" id="UP000001190">
    <property type="component" value="Chromosome"/>
</dbReference>
<dbReference type="GO" id="GO:0015420">
    <property type="term" value="F:ABC-type vitamin B12 transporter activity"/>
    <property type="evidence" value="ECO:0007669"/>
    <property type="project" value="UniProtKB-UniRule"/>
</dbReference>
<dbReference type="GO" id="GO:0003824">
    <property type="term" value="F:catalytic activity"/>
    <property type="evidence" value="ECO:0007669"/>
    <property type="project" value="InterPro"/>
</dbReference>
<dbReference type="GO" id="GO:0009236">
    <property type="term" value="P:cobalamin biosynthetic process"/>
    <property type="evidence" value="ECO:0007669"/>
    <property type="project" value="UniProtKB-UniRule"/>
</dbReference>
<dbReference type="CDD" id="cd05389">
    <property type="entry name" value="CobQ_N"/>
    <property type="match status" value="1"/>
</dbReference>
<dbReference type="CDD" id="cd01750">
    <property type="entry name" value="GATase1_CobQ"/>
    <property type="match status" value="1"/>
</dbReference>
<dbReference type="Gene3D" id="3.40.50.880">
    <property type="match status" value="1"/>
</dbReference>
<dbReference type="Gene3D" id="3.40.50.300">
    <property type="entry name" value="P-loop containing nucleotide triphosphate hydrolases"/>
    <property type="match status" value="1"/>
</dbReference>
<dbReference type="HAMAP" id="MF_00028">
    <property type="entry name" value="CobQ"/>
    <property type="match status" value="1"/>
</dbReference>
<dbReference type="InterPro" id="IPR029062">
    <property type="entry name" value="Class_I_gatase-like"/>
</dbReference>
<dbReference type="InterPro" id="IPR002586">
    <property type="entry name" value="CobQ/CobB/MinD/ParA_Nub-bd_dom"/>
</dbReference>
<dbReference type="InterPro" id="IPR033949">
    <property type="entry name" value="CobQ_GATase1"/>
</dbReference>
<dbReference type="InterPro" id="IPR047045">
    <property type="entry name" value="CobQ_N"/>
</dbReference>
<dbReference type="InterPro" id="IPR004459">
    <property type="entry name" value="CobQ_synth"/>
</dbReference>
<dbReference type="InterPro" id="IPR011698">
    <property type="entry name" value="GATase_3"/>
</dbReference>
<dbReference type="InterPro" id="IPR027417">
    <property type="entry name" value="P-loop_NTPase"/>
</dbReference>
<dbReference type="NCBIfam" id="TIGR00313">
    <property type="entry name" value="cobQ"/>
    <property type="match status" value="1"/>
</dbReference>
<dbReference type="NCBIfam" id="NF001989">
    <property type="entry name" value="PRK00784.1"/>
    <property type="match status" value="1"/>
</dbReference>
<dbReference type="PANTHER" id="PTHR21343:SF1">
    <property type="entry name" value="COBYRIC ACID SYNTHASE"/>
    <property type="match status" value="1"/>
</dbReference>
<dbReference type="PANTHER" id="PTHR21343">
    <property type="entry name" value="DETHIOBIOTIN SYNTHETASE"/>
    <property type="match status" value="1"/>
</dbReference>
<dbReference type="Pfam" id="PF01656">
    <property type="entry name" value="CbiA"/>
    <property type="match status" value="1"/>
</dbReference>
<dbReference type="Pfam" id="PF07685">
    <property type="entry name" value="GATase_3"/>
    <property type="match status" value="1"/>
</dbReference>
<dbReference type="SUPFAM" id="SSF52317">
    <property type="entry name" value="Class I glutamine amidotransferase-like"/>
    <property type="match status" value="1"/>
</dbReference>
<dbReference type="SUPFAM" id="SSF52540">
    <property type="entry name" value="P-loop containing nucleoside triphosphate hydrolases"/>
    <property type="match status" value="1"/>
</dbReference>
<dbReference type="PROSITE" id="PS51274">
    <property type="entry name" value="GATASE_COBBQ"/>
    <property type="match status" value="1"/>
</dbReference>
<name>COBQ_MYCMM</name>
<sequence length="491" mass="51454">MPGLLVAGTTSDAGKSTLTAGLCRAFARRGVRVAPFKAQNMSNNSMVCQGPGGAGVEIGRAQWVQALAANATPEAAMNPVLLKPGSDHRSHVVLMGRSWGELASSNWFEGRQVLAETAHRAFDDLAARYDVVVAEGAGSPAEINLRAGDYVNMGLACHAELPTIVVGDIDRGGVFAAFFGTIALLSAEDQALVAGFVVNKFRGDLDLLAPGLRDLEGVTGRQVFGTLPWHADLWLDSEDALDLTGRRAASTGAHRVAVVRLPRISNFTDVDALGLEPDLDVVFASDPRGLGDADLIVVPGTRATIADLAWLRARGLDRALMAHVAAGKPLLGICGGFQMLGRVIRDPDGVEGPVAEADGLGLLDVETTFGAEKVLRLPRGQGLGVTASGYEIHHGRITAGDAAQQFLGGARDGQVFGTMWHGSLEGDALREAFLRETLGLTGSGTSFSAARERRLDLLGDLVERHLDVDALLALARHGCAPALPFLPPGAP</sequence>
<keyword id="KW-0169">Cobalamin biosynthesis</keyword>
<keyword id="KW-0315">Glutamine amidotransferase</keyword>
<keyword id="KW-1185">Reference proteome</keyword>
<reference key="1">
    <citation type="journal article" date="2008" name="Genome Res.">
        <title>Insights from the complete genome sequence of Mycobacterium marinum on the evolution of Mycobacterium tuberculosis.</title>
        <authorList>
            <person name="Stinear T.P."/>
            <person name="Seemann T."/>
            <person name="Harrison P.F."/>
            <person name="Jenkin G.A."/>
            <person name="Davies J.K."/>
            <person name="Johnson P.D."/>
            <person name="Abdellah Z."/>
            <person name="Arrowsmith C."/>
            <person name="Chillingworth T."/>
            <person name="Churcher C."/>
            <person name="Clarke K."/>
            <person name="Cronin A."/>
            <person name="Davis P."/>
            <person name="Goodhead I."/>
            <person name="Holroyd N."/>
            <person name="Jagels K."/>
            <person name="Lord A."/>
            <person name="Moule S."/>
            <person name="Mungall K."/>
            <person name="Norbertczak H."/>
            <person name="Quail M.A."/>
            <person name="Rabbinowitsch E."/>
            <person name="Walker D."/>
            <person name="White B."/>
            <person name="Whitehead S."/>
            <person name="Small P.L."/>
            <person name="Brosch R."/>
            <person name="Ramakrishnan L."/>
            <person name="Fischbach M.A."/>
            <person name="Parkhill J."/>
            <person name="Cole S.T."/>
        </authorList>
    </citation>
    <scope>NUCLEOTIDE SEQUENCE [LARGE SCALE GENOMIC DNA]</scope>
    <source>
        <strain>ATCC BAA-535 / M</strain>
    </source>
</reference>
<proteinExistence type="inferred from homology"/>
<protein>
    <recommendedName>
        <fullName evidence="1">Cobyric acid synthase</fullName>
    </recommendedName>
</protein>
<evidence type="ECO:0000255" key="1">
    <source>
        <dbReference type="HAMAP-Rule" id="MF_00028"/>
    </source>
</evidence>
<organism>
    <name type="scientific">Mycobacterium marinum (strain ATCC BAA-535 / M)</name>
    <dbReference type="NCBI Taxonomy" id="216594"/>
    <lineage>
        <taxon>Bacteria</taxon>
        <taxon>Bacillati</taxon>
        <taxon>Actinomycetota</taxon>
        <taxon>Actinomycetes</taxon>
        <taxon>Mycobacteriales</taxon>
        <taxon>Mycobacteriaceae</taxon>
        <taxon>Mycobacterium</taxon>
        <taxon>Mycobacterium ulcerans group</taxon>
    </lineage>
</organism>
<comment type="function">
    <text evidence="1">Catalyzes amidations at positions B, D, E, and G on adenosylcobyrinic A,C-diamide. NH(2) groups are provided by glutamine, and one molecule of ATP is hydrogenolyzed for each amidation.</text>
</comment>
<comment type="pathway">
    <text evidence="1">Cofactor biosynthesis; adenosylcobalamin biosynthesis.</text>
</comment>
<comment type="similarity">
    <text evidence="1">Belongs to the CobB/CobQ family. CobQ subfamily.</text>
</comment>
<accession>B2HNJ6</accession>
<gene>
    <name evidence="1" type="primary">cobQ</name>
    <name type="ordered locus">MMAR_3838</name>
</gene>
<feature type="chain" id="PRO_1000090236" description="Cobyric acid synthase">
    <location>
        <begin position="1"/>
        <end position="491"/>
    </location>
</feature>
<feature type="domain" description="GATase cobBQ-type" evidence="1">
    <location>
        <begin position="253"/>
        <end position="429"/>
    </location>
</feature>
<feature type="active site" description="Nucleophile" evidence="1">
    <location>
        <position position="334"/>
    </location>
</feature>
<feature type="active site" evidence="1">
    <location>
        <position position="421"/>
    </location>
</feature>